<organism>
    <name type="scientific">Nicotiana tabacum</name>
    <name type="common">Common tobacco</name>
    <dbReference type="NCBI Taxonomy" id="4097"/>
    <lineage>
        <taxon>Eukaryota</taxon>
        <taxon>Viridiplantae</taxon>
        <taxon>Streptophyta</taxon>
        <taxon>Embryophyta</taxon>
        <taxon>Tracheophyta</taxon>
        <taxon>Spermatophyta</taxon>
        <taxon>Magnoliopsida</taxon>
        <taxon>eudicotyledons</taxon>
        <taxon>Gunneridae</taxon>
        <taxon>Pentapetalae</taxon>
        <taxon>asterids</taxon>
        <taxon>lamiids</taxon>
        <taxon>Solanales</taxon>
        <taxon>Solanaceae</taxon>
        <taxon>Nicotianoideae</taxon>
        <taxon>Nicotianeae</taxon>
        <taxon>Nicotiana</taxon>
    </lineage>
</organism>
<proteinExistence type="evidence at transcript level"/>
<sequence>MAALQQTPITFQSRSPPPTQIISGPTAKLSFSGGLKLPKLTIKLRSNRTSRRGGGAAGSKMVASAAGSYANALADIAKSNGTLEQTTADLEKIEKISDDEAVFNFFVSPIVGEEKKRELVDEIVSSSSIQPHVANFLNILVDMKRVELIKEIVKEFEKVYNTLTDTELAVVTSVVKLESQHLAQIAKGVQRLTGSKNVRIKTVIDESLVAGFTIRYGNSGSKLIDMSVKKQLEDIAAQLEIGDIQLAV</sequence>
<gene>
    <name type="primary">ATPD</name>
</gene>
<name>ATPD_TOBAC</name>
<feature type="transit peptide" description="Chloroplast" evidence="1">
    <location>
        <begin position="1"/>
        <end position="60"/>
    </location>
</feature>
<feature type="chain" id="PRO_0000002642" description="ATP synthase delta chain, chloroplastic">
    <location>
        <begin position="61"/>
        <end position="248"/>
    </location>
</feature>
<accession>P32980</accession>
<keyword id="KW-0066">ATP synthesis</keyword>
<keyword id="KW-0139">CF(1)</keyword>
<keyword id="KW-0150">Chloroplast</keyword>
<keyword id="KW-0375">Hydrogen ion transport</keyword>
<keyword id="KW-0406">Ion transport</keyword>
<keyword id="KW-0472">Membrane</keyword>
<keyword id="KW-0934">Plastid</keyword>
<keyword id="KW-1185">Reference proteome</keyword>
<keyword id="KW-0793">Thylakoid</keyword>
<keyword id="KW-0809">Transit peptide</keyword>
<keyword id="KW-0813">Transport</keyword>
<comment type="function">
    <text>This protein seems to be part of the stalk that links CF(0) to CF(1). It either transmits conformational changes from CF(0) into CF(1) or is implicated in proton conduction.</text>
</comment>
<comment type="subunit">
    <text>F-type ATPases have 2 components, CF(1) - the catalytic core - and CF(0) - the membrane proton channel. CF(1) has five subunits: alpha(3), beta(3), gamma(1), delta(1), epsilon(1). CF(0) has three main subunits: a, b and c.</text>
</comment>
<comment type="subcellular location">
    <subcellularLocation>
        <location>Plastid</location>
        <location>Chloroplast thylakoid membrane</location>
    </subcellularLocation>
</comment>
<comment type="similarity">
    <text evidence="2">Belongs to the ATPase delta chain family.</text>
</comment>
<reference key="1">
    <citation type="journal article" date="1992" name="Plant Mol. Biol.">
        <title>Import and processing of the precursor of the delta subunit of tobacco chloroplast ATP synthase.</title>
        <authorList>
            <person name="Napier J.A."/>
            <person name="Larsson K.H."/>
            <person name="Madueno F."/>
            <person name="Gray J.C."/>
        </authorList>
    </citation>
    <scope>NUCLEOTIDE SEQUENCE [MRNA]</scope>
    <source>
        <tissue>Leaf</tissue>
    </source>
</reference>
<evidence type="ECO:0000255" key="1"/>
<evidence type="ECO:0000305" key="2"/>
<dbReference type="EMBL" id="X63607">
    <property type="protein sequence ID" value="CAA45153.1"/>
    <property type="molecule type" value="mRNA"/>
</dbReference>
<dbReference type="PIR" id="S26198">
    <property type="entry name" value="S26198"/>
</dbReference>
<dbReference type="RefSeq" id="NP_001312568.1">
    <property type="nucleotide sequence ID" value="NM_001325639.1"/>
</dbReference>
<dbReference type="SMR" id="P32980"/>
<dbReference type="STRING" id="4097.P32980"/>
<dbReference type="PaxDb" id="4097-P32980"/>
<dbReference type="GeneID" id="107797795"/>
<dbReference type="KEGG" id="nta:107797795"/>
<dbReference type="OrthoDB" id="1262810at2759"/>
<dbReference type="Proteomes" id="UP000084051">
    <property type="component" value="Unplaced"/>
</dbReference>
<dbReference type="GO" id="GO:0009535">
    <property type="term" value="C:chloroplast thylakoid membrane"/>
    <property type="evidence" value="ECO:0007669"/>
    <property type="project" value="UniProtKB-SubCell"/>
</dbReference>
<dbReference type="GO" id="GO:0045259">
    <property type="term" value="C:proton-transporting ATP synthase complex"/>
    <property type="evidence" value="ECO:0007669"/>
    <property type="project" value="UniProtKB-KW"/>
</dbReference>
<dbReference type="GO" id="GO:0046933">
    <property type="term" value="F:proton-transporting ATP synthase activity, rotational mechanism"/>
    <property type="evidence" value="ECO:0007669"/>
    <property type="project" value="InterPro"/>
</dbReference>
<dbReference type="GO" id="GO:0009773">
    <property type="term" value="P:photosynthetic electron transport in photosystem I"/>
    <property type="evidence" value="ECO:0000318"/>
    <property type="project" value="GO_Central"/>
</dbReference>
<dbReference type="GO" id="GO:0009772">
    <property type="term" value="P:photosynthetic electron transport in photosystem II"/>
    <property type="evidence" value="ECO:0000318"/>
    <property type="project" value="GO_Central"/>
</dbReference>
<dbReference type="GO" id="GO:0015986">
    <property type="term" value="P:proton motive force-driven ATP synthesis"/>
    <property type="evidence" value="ECO:0000318"/>
    <property type="project" value="GO_Central"/>
</dbReference>
<dbReference type="Gene3D" id="1.10.520.20">
    <property type="entry name" value="N-terminal domain of the delta subunit of the F1F0-ATP synthase"/>
    <property type="match status" value="1"/>
</dbReference>
<dbReference type="HAMAP" id="MF_01416">
    <property type="entry name" value="ATP_synth_delta_bact"/>
    <property type="match status" value="1"/>
</dbReference>
<dbReference type="InterPro" id="IPR026015">
    <property type="entry name" value="ATP_synth_OSCP/delta_N_sf"/>
</dbReference>
<dbReference type="InterPro" id="IPR020781">
    <property type="entry name" value="ATPase_OSCP/d_CS"/>
</dbReference>
<dbReference type="InterPro" id="IPR000711">
    <property type="entry name" value="ATPase_OSCP/dsu"/>
</dbReference>
<dbReference type="NCBIfam" id="TIGR01145">
    <property type="entry name" value="ATP_synt_delta"/>
    <property type="match status" value="1"/>
</dbReference>
<dbReference type="PANTHER" id="PTHR11910">
    <property type="entry name" value="ATP SYNTHASE DELTA CHAIN"/>
    <property type="match status" value="1"/>
</dbReference>
<dbReference type="Pfam" id="PF00213">
    <property type="entry name" value="OSCP"/>
    <property type="match status" value="1"/>
</dbReference>
<dbReference type="PRINTS" id="PR00125">
    <property type="entry name" value="ATPASEDELTA"/>
</dbReference>
<dbReference type="SUPFAM" id="SSF47928">
    <property type="entry name" value="N-terminal domain of the delta subunit of the F1F0-ATP synthase"/>
    <property type="match status" value="1"/>
</dbReference>
<dbReference type="PROSITE" id="PS00389">
    <property type="entry name" value="ATPASE_DELTA"/>
    <property type="match status" value="1"/>
</dbReference>
<protein>
    <recommendedName>
        <fullName>ATP synthase delta chain, chloroplastic</fullName>
    </recommendedName>
    <alternativeName>
        <fullName>F-ATPase delta chain</fullName>
    </alternativeName>
</protein>